<name>ILVD_THET8</name>
<reference key="1">
    <citation type="submission" date="2004-11" db="EMBL/GenBank/DDBJ databases">
        <title>Complete genome sequence of Thermus thermophilus HB8.</title>
        <authorList>
            <person name="Masui R."/>
            <person name="Kurokawa K."/>
            <person name="Nakagawa N."/>
            <person name="Tokunaga F."/>
            <person name="Koyama Y."/>
            <person name="Shibata T."/>
            <person name="Oshima T."/>
            <person name="Yokoyama S."/>
            <person name="Yasunaga T."/>
            <person name="Kuramitsu S."/>
        </authorList>
    </citation>
    <scope>NUCLEOTIDE SEQUENCE [LARGE SCALE GENOMIC DNA]</scope>
    <source>
        <strain>ATCC 27634 / DSM 579 / HB8</strain>
    </source>
</reference>
<protein>
    <recommendedName>
        <fullName evidence="1">Dihydroxy-acid dehydratase</fullName>
        <shortName evidence="1">DAD</shortName>
        <ecNumber evidence="1">4.2.1.9</ecNumber>
    </recommendedName>
</protein>
<organism>
    <name type="scientific">Thermus thermophilus (strain ATCC 27634 / DSM 579 / HB8)</name>
    <dbReference type="NCBI Taxonomy" id="300852"/>
    <lineage>
        <taxon>Bacteria</taxon>
        <taxon>Thermotogati</taxon>
        <taxon>Deinococcota</taxon>
        <taxon>Deinococci</taxon>
        <taxon>Thermales</taxon>
        <taxon>Thermaceae</taxon>
        <taxon>Thermus</taxon>
    </lineage>
</organism>
<proteinExistence type="inferred from homology"/>
<sequence length="555" mass="59491">MRSDQIKKGLKQAPARAMLRAVGVGDEDFGRPFVGVVNTFTDGMPCNFHLRELAQHLKAGLKEAGLFPFEFGAPAISDGISMGTPGMRASLVSREVIADSVELIAQGYLYDGMVGLSACDKTIPGTAMGVIRSGVPGMILYGGTIAPGEWQGRKLTIVEVFEAVGQRAAGKISEEELLEIERRAIPGPGACGGQYTANTMAMALEALGLSPVGYNAIPAVHPEKERATKEAGKILAWAIAHDWKPKDFLTRKSFLNAIAAVAATGGSTNAVLHLLALAKEAGVELSLDDFDQISRKTPVIADLRPWGTYTAWELYEAGGTALVFKRLLEAGLLFGEEKTLTGRTLAEEVERAYREQEGQKVVFPVEKALKPHGGLVVLKGNLAPKGAVLKLAGTERTYFEGPARVFDSEEAAMEKVLKGEIRPGDVVVIRYVGPKGAPGMPEMLSVTSAIVGEGLGPEVALLTDGRFSGGTRGLMIGHIAPEAFVGGPIALLEEGDRIRIDVEGRRLEVLLPEEELERRRARWRPRPPAFTHGLFARYAALVRQADEGAVLEDPL</sequence>
<evidence type="ECO:0000255" key="1">
    <source>
        <dbReference type="HAMAP-Rule" id="MF_00012"/>
    </source>
</evidence>
<dbReference type="EC" id="4.2.1.9" evidence="1"/>
<dbReference type="EMBL" id="AP008226">
    <property type="protein sequence ID" value="BAD71057.1"/>
    <property type="molecule type" value="Genomic_DNA"/>
</dbReference>
<dbReference type="RefSeq" id="WP_011228538.1">
    <property type="nucleotide sequence ID" value="NC_006461.1"/>
</dbReference>
<dbReference type="RefSeq" id="YP_144500.1">
    <property type="nucleotide sequence ID" value="NC_006461.1"/>
</dbReference>
<dbReference type="SMR" id="Q5SIY0"/>
<dbReference type="EnsemblBacteria" id="BAD71057">
    <property type="protein sequence ID" value="BAD71057"/>
    <property type="gene ID" value="BAD71057"/>
</dbReference>
<dbReference type="GeneID" id="3168985"/>
<dbReference type="KEGG" id="ttj:TTHA1234"/>
<dbReference type="PATRIC" id="fig|300852.9.peg.1213"/>
<dbReference type="eggNOG" id="COG0129">
    <property type="taxonomic scope" value="Bacteria"/>
</dbReference>
<dbReference type="HOGENOM" id="CLU_014271_4_2_0"/>
<dbReference type="PhylomeDB" id="Q5SIY0"/>
<dbReference type="UniPathway" id="UPA00047">
    <property type="reaction ID" value="UER00057"/>
</dbReference>
<dbReference type="UniPathway" id="UPA00049">
    <property type="reaction ID" value="UER00061"/>
</dbReference>
<dbReference type="Proteomes" id="UP000000532">
    <property type="component" value="Chromosome"/>
</dbReference>
<dbReference type="GO" id="GO:0051537">
    <property type="term" value="F:2 iron, 2 sulfur cluster binding"/>
    <property type="evidence" value="ECO:0007669"/>
    <property type="project" value="UniProtKB-UniRule"/>
</dbReference>
<dbReference type="GO" id="GO:0004160">
    <property type="term" value="F:dihydroxy-acid dehydratase activity"/>
    <property type="evidence" value="ECO:0007669"/>
    <property type="project" value="UniProtKB-UniRule"/>
</dbReference>
<dbReference type="GO" id="GO:0000287">
    <property type="term" value="F:magnesium ion binding"/>
    <property type="evidence" value="ECO:0007669"/>
    <property type="project" value="UniProtKB-UniRule"/>
</dbReference>
<dbReference type="GO" id="GO:0009097">
    <property type="term" value="P:isoleucine biosynthetic process"/>
    <property type="evidence" value="ECO:0007669"/>
    <property type="project" value="UniProtKB-UniRule"/>
</dbReference>
<dbReference type="GO" id="GO:0009099">
    <property type="term" value="P:L-valine biosynthetic process"/>
    <property type="evidence" value="ECO:0007669"/>
    <property type="project" value="UniProtKB-UniRule"/>
</dbReference>
<dbReference type="FunFam" id="3.50.30.80:FF:000001">
    <property type="entry name" value="Dihydroxy-acid dehydratase"/>
    <property type="match status" value="1"/>
</dbReference>
<dbReference type="Gene3D" id="3.50.30.80">
    <property type="entry name" value="IlvD/EDD C-terminal domain-like"/>
    <property type="match status" value="1"/>
</dbReference>
<dbReference type="HAMAP" id="MF_00012">
    <property type="entry name" value="IlvD"/>
    <property type="match status" value="1"/>
</dbReference>
<dbReference type="InterPro" id="IPR050165">
    <property type="entry name" value="DHAD_IlvD/Edd"/>
</dbReference>
<dbReference type="InterPro" id="IPR042096">
    <property type="entry name" value="Dihydro-acid_dehy_C"/>
</dbReference>
<dbReference type="InterPro" id="IPR004404">
    <property type="entry name" value="DihydroxyA_deHydtase"/>
</dbReference>
<dbReference type="InterPro" id="IPR020558">
    <property type="entry name" value="DiOHA_6PGluconate_deHydtase_CS"/>
</dbReference>
<dbReference type="InterPro" id="IPR056740">
    <property type="entry name" value="ILV_EDD_C"/>
</dbReference>
<dbReference type="InterPro" id="IPR000581">
    <property type="entry name" value="ILV_EDD_N"/>
</dbReference>
<dbReference type="InterPro" id="IPR037237">
    <property type="entry name" value="IlvD/EDD_N"/>
</dbReference>
<dbReference type="NCBIfam" id="TIGR00110">
    <property type="entry name" value="ilvD"/>
    <property type="match status" value="1"/>
</dbReference>
<dbReference type="NCBIfam" id="NF002068">
    <property type="entry name" value="PRK00911.1"/>
    <property type="match status" value="1"/>
</dbReference>
<dbReference type="PANTHER" id="PTHR21000">
    <property type="entry name" value="DIHYDROXY-ACID DEHYDRATASE DAD"/>
    <property type="match status" value="1"/>
</dbReference>
<dbReference type="PANTHER" id="PTHR21000:SF5">
    <property type="entry name" value="DIHYDROXY-ACID DEHYDRATASE, MITOCHONDRIAL"/>
    <property type="match status" value="1"/>
</dbReference>
<dbReference type="Pfam" id="PF24877">
    <property type="entry name" value="ILV_EDD_C"/>
    <property type="match status" value="1"/>
</dbReference>
<dbReference type="Pfam" id="PF00920">
    <property type="entry name" value="ILVD_EDD_N"/>
    <property type="match status" value="1"/>
</dbReference>
<dbReference type="SUPFAM" id="SSF143975">
    <property type="entry name" value="IlvD/EDD N-terminal domain-like"/>
    <property type="match status" value="1"/>
</dbReference>
<dbReference type="SUPFAM" id="SSF52016">
    <property type="entry name" value="LeuD/IlvD-like"/>
    <property type="match status" value="1"/>
</dbReference>
<dbReference type="PROSITE" id="PS00886">
    <property type="entry name" value="ILVD_EDD_1"/>
    <property type="match status" value="1"/>
</dbReference>
<dbReference type="PROSITE" id="PS00887">
    <property type="entry name" value="ILVD_EDD_2"/>
    <property type="match status" value="1"/>
</dbReference>
<gene>
    <name evidence="1" type="primary">ilvD</name>
    <name type="ordered locus">TTHA1234</name>
</gene>
<comment type="function">
    <text evidence="1">Functions in the biosynthesis of branched-chain amino acids. Catalyzes the dehydration of (2R,3R)-2,3-dihydroxy-3-methylpentanoate (2,3-dihydroxy-3-methylvalerate) into 2-oxo-3-methylpentanoate (2-oxo-3-methylvalerate) and of (2R)-2,3-dihydroxy-3-methylbutanoate (2,3-dihydroxyisovalerate) into 2-oxo-3-methylbutanoate (2-oxoisovalerate), the penultimate precursor to L-isoleucine and L-valine, respectively.</text>
</comment>
<comment type="catalytic activity">
    <reaction evidence="1">
        <text>(2R)-2,3-dihydroxy-3-methylbutanoate = 3-methyl-2-oxobutanoate + H2O</text>
        <dbReference type="Rhea" id="RHEA:24809"/>
        <dbReference type="ChEBI" id="CHEBI:11851"/>
        <dbReference type="ChEBI" id="CHEBI:15377"/>
        <dbReference type="ChEBI" id="CHEBI:49072"/>
        <dbReference type="EC" id="4.2.1.9"/>
    </reaction>
    <physiologicalReaction direction="left-to-right" evidence="1">
        <dbReference type="Rhea" id="RHEA:24810"/>
    </physiologicalReaction>
</comment>
<comment type="catalytic activity">
    <reaction evidence="1">
        <text>(2R,3R)-2,3-dihydroxy-3-methylpentanoate = (S)-3-methyl-2-oxopentanoate + H2O</text>
        <dbReference type="Rhea" id="RHEA:27694"/>
        <dbReference type="ChEBI" id="CHEBI:15377"/>
        <dbReference type="ChEBI" id="CHEBI:35146"/>
        <dbReference type="ChEBI" id="CHEBI:49258"/>
        <dbReference type="EC" id="4.2.1.9"/>
    </reaction>
    <physiologicalReaction direction="left-to-right" evidence="1">
        <dbReference type="Rhea" id="RHEA:27695"/>
    </physiologicalReaction>
</comment>
<comment type="cofactor">
    <cofactor evidence="1">
        <name>[2Fe-2S] cluster</name>
        <dbReference type="ChEBI" id="CHEBI:190135"/>
    </cofactor>
    <text evidence="1">Binds 1 [2Fe-2S] cluster per subunit. This cluster acts as a Lewis acid cofactor.</text>
</comment>
<comment type="cofactor">
    <cofactor evidence="1">
        <name>Mg(2+)</name>
        <dbReference type="ChEBI" id="CHEBI:18420"/>
    </cofactor>
</comment>
<comment type="pathway">
    <text evidence="1">Amino-acid biosynthesis; L-isoleucine biosynthesis; L-isoleucine from 2-oxobutanoate: step 3/4.</text>
</comment>
<comment type="pathway">
    <text evidence="1">Amino-acid biosynthesis; L-valine biosynthesis; L-valine from pyruvate: step 3/4.</text>
</comment>
<comment type="subunit">
    <text evidence="1">Homodimer.</text>
</comment>
<comment type="similarity">
    <text evidence="1">Belongs to the IlvD/Edd family.</text>
</comment>
<keyword id="KW-0001">2Fe-2S</keyword>
<keyword id="KW-0028">Amino-acid biosynthesis</keyword>
<keyword id="KW-0100">Branched-chain amino acid biosynthesis</keyword>
<keyword id="KW-0408">Iron</keyword>
<keyword id="KW-0411">Iron-sulfur</keyword>
<keyword id="KW-0456">Lyase</keyword>
<keyword id="KW-0460">Magnesium</keyword>
<keyword id="KW-0479">Metal-binding</keyword>
<keyword id="KW-1185">Reference proteome</keyword>
<accession>Q5SIY0</accession>
<feature type="chain" id="PRO_0000225434" description="Dihydroxy-acid dehydratase">
    <location>
        <begin position="1"/>
        <end position="555"/>
    </location>
</feature>
<feature type="active site" description="Proton acceptor" evidence="1">
    <location>
        <position position="468"/>
    </location>
</feature>
<feature type="binding site" evidence="1">
    <location>
        <position position="46"/>
    </location>
    <ligand>
        <name>[2Fe-2S] cluster</name>
        <dbReference type="ChEBI" id="CHEBI:190135"/>
    </ligand>
</feature>
<feature type="binding site" evidence="1">
    <location>
        <position position="78"/>
    </location>
    <ligand>
        <name>Mg(2+)</name>
        <dbReference type="ChEBI" id="CHEBI:18420"/>
    </ligand>
</feature>
<feature type="binding site" evidence="1">
    <location>
        <position position="119"/>
    </location>
    <ligand>
        <name>[2Fe-2S] cluster</name>
        <dbReference type="ChEBI" id="CHEBI:190135"/>
    </ligand>
</feature>
<feature type="binding site" evidence="1">
    <location>
        <position position="120"/>
    </location>
    <ligand>
        <name>Mg(2+)</name>
        <dbReference type="ChEBI" id="CHEBI:18420"/>
    </ligand>
</feature>
<feature type="binding site" description="via carbamate group" evidence="1">
    <location>
        <position position="121"/>
    </location>
    <ligand>
        <name>Mg(2+)</name>
        <dbReference type="ChEBI" id="CHEBI:18420"/>
    </ligand>
</feature>
<feature type="binding site" evidence="1">
    <location>
        <position position="191"/>
    </location>
    <ligand>
        <name>[2Fe-2S] cluster</name>
        <dbReference type="ChEBI" id="CHEBI:190135"/>
    </ligand>
</feature>
<feature type="binding site" evidence="1">
    <location>
        <position position="442"/>
    </location>
    <ligand>
        <name>Mg(2+)</name>
        <dbReference type="ChEBI" id="CHEBI:18420"/>
    </ligand>
</feature>
<feature type="modified residue" description="N6-carboxylysine" evidence="1">
    <location>
        <position position="121"/>
    </location>
</feature>